<sequence length="861" mass="100018">MFNRKRRGDFDEDENYRDFRPRMPKRQRIPPVVQLCKEMMPDIRTIGESVKAFEDDIKFLSEAIMNEYGHEDYFNNALLSTLNAVVVEQPQKQAAIALLTMVVNSKNNVAGKSIINYFFEELQKWCKQTYNDEFKSTSNETGPWNKIKLILRFLSILSPMFLVDELINIYKSLFELSIELNNLDPGNRVPLSEAIYTNTLLNIPYLFFFNRNNDGLRTKVEELLAYVEQNYLVKTTDINLLREYNGEPPYEMVELVRVVLPNVKKALINNLEQLNELFPDWNHLLTPQTGDEGFNDALTLPSVDDLKSFVRLNKNFGSVDSMWKTPRYAFHVYLPNSAGNFETVVPISTYAGQLFNDIIIDLVESLEFNRKEVARQVITLDLFFKAGIFTEPGESIAQLIATYEENPLAPTFKIEDLAIETILGLIFKLPSVSQPFAYFYTLLVDICQNSPKAIAPVFGRAFRFFYSHLDSLDFELKLRYLDWFSIQMSNFNFSWKWNEWEDDSIKFGKYFYNPKVNFAKNLIQKELRLTSNFSEVEDSLPQEFTKYLDTSYIPRDQLINYYQSLFTGYTVEEDSVRKNDLYFRQEGVPMENTVRKILDYTHKANNSREVTELESILGELKNEYGSIISDFNRFVIILLVQAVTDSGSRSLSHANKYINDLKEDLKTIFAKIELDIETKEYIIIEAVLTFWNANPQTGFLVADAFKYAGLLTSRTIFTFIFNETGLKNNGLIEATAIEAVFRNLSQQISEENESGNNFEFVFERLCTIANSTIDLLDVNADEDIEIPKVNGEMDIDDIEDDKLDLKWKYFTVIGFIKSILRRYSHEYRELADKFIANIDNAIPHESTRRTISNWIQETKEV</sequence>
<accession>P34160</accession>
<accession>D6VZU8</accession>
<reference key="1">
    <citation type="journal article" date="1992" name="J. Bacteriol.">
        <title>GCR3 encodes an acidic protein that is required for expression of glycolytic genes in Saccharomyces cerevisiae.</title>
        <authorList>
            <person name="Uemura H."/>
            <person name="Jigami Y."/>
        </authorList>
    </citation>
    <scope>NUCLEOTIDE SEQUENCE [GENOMIC DNA]</scope>
    <scope>FUNCTION</scope>
</reference>
<reference key="2">
    <citation type="journal article" date="1996" name="Genetics">
        <title>Mutations in GCR3, a gene involved in the expression of glycolytic genes in Saccharomyces cerevisiae, suppress the temperature-sensitive growth of hpr1 mutants.</title>
        <authorList>
            <person name="Uemura H."/>
            <person name="Pandit S."/>
            <person name="Jigami Y."/>
            <person name="Sternglanz R."/>
        </authorList>
    </citation>
    <scope>NUCLEOTIDE SEQUENCE [GENOMIC DNA]</scope>
    <scope>FUNCTION</scope>
</reference>
<reference key="3">
    <citation type="journal article" date="2000" name="Mol. Cell. Biol.">
        <title>The role of nuclear cap binding protein Cbc1p of yeast in mRNA termination and degradation.</title>
        <authorList>
            <person name="Das B."/>
            <person name="Guo Z."/>
            <person name="Russo P."/>
            <person name="Chartrand P."/>
            <person name="Sherman F."/>
        </authorList>
    </citation>
    <scope>NUCLEOTIDE SEQUENCE [GENOMIC DNA]</scope>
    <scope>IDENTIFICATION OF INTRON</scope>
    <scope>FUNCTION</scope>
    <scope>SUBCELLULAR LOCATION</scope>
</reference>
<reference key="4">
    <citation type="journal article" date="1997" name="Nature">
        <title>The nucleotide sequence of Saccharomyces cerevisiae chromosome XIII.</title>
        <authorList>
            <person name="Bowman S."/>
            <person name="Churcher C.M."/>
            <person name="Badcock K."/>
            <person name="Brown D."/>
            <person name="Chillingworth T."/>
            <person name="Connor R."/>
            <person name="Dedman K."/>
            <person name="Devlin K."/>
            <person name="Gentles S."/>
            <person name="Hamlin N."/>
            <person name="Hunt S."/>
            <person name="Jagels K."/>
            <person name="Lye G."/>
            <person name="Moule S."/>
            <person name="Odell C."/>
            <person name="Pearson D."/>
            <person name="Rajandream M.A."/>
            <person name="Rice P."/>
            <person name="Skelton J."/>
            <person name="Walsh S.V."/>
            <person name="Whitehead S."/>
            <person name="Barrell B.G."/>
        </authorList>
    </citation>
    <scope>NUCLEOTIDE SEQUENCE [LARGE SCALE GENOMIC DNA]</scope>
    <source>
        <strain>ATCC 204508 / S288c</strain>
    </source>
</reference>
<reference key="5">
    <citation type="journal article" date="2014" name="G3 (Bethesda)">
        <title>The reference genome sequence of Saccharomyces cerevisiae: Then and now.</title>
        <authorList>
            <person name="Engel S.R."/>
            <person name="Dietrich F.S."/>
            <person name="Fisk D.G."/>
            <person name="Binkley G."/>
            <person name="Balakrishnan R."/>
            <person name="Costanzo M.C."/>
            <person name="Dwight S.S."/>
            <person name="Hitz B.C."/>
            <person name="Karra K."/>
            <person name="Nash R.S."/>
            <person name="Weng S."/>
            <person name="Wong E.D."/>
            <person name="Lloyd P."/>
            <person name="Skrzypek M.S."/>
            <person name="Miyasato S.R."/>
            <person name="Simison M."/>
            <person name="Cherry J.M."/>
        </authorList>
    </citation>
    <scope>GENOME REANNOTATION</scope>
    <source>
        <strain>ATCC 204508 / S288c</strain>
    </source>
</reference>
<reference key="6">
    <citation type="journal article" date="1996" name="Cell">
        <title>Importin provides a link between nuclear protein import and U snRNA export.</title>
        <authorList>
            <person name="Goerlich D."/>
            <person name="Kraft R."/>
            <person name="Kostka S."/>
            <person name="Vogel F."/>
            <person name="Hartmann E."/>
            <person name="Laskey R.A."/>
            <person name="Mattaj I.W."/>
            <person name="Izaurraide E."/>
        </authorList>
    </citation>
    <scope>PARTIAL PROTEIN SEQUENCE</scope>
    <scope>IDENTIFICATION IN THE CBC AND SRP1-CBC COMPLEXES</scope>
    <scope>U SNRNA-BINDING</scope>
    <scope>SUBCELLULAR LOCATION</scope>
    <scope>FUNCTION OF THE CBC AND SRP1-CBC COMPLEXES</scope>
</reference>
<reference key="7">
    <citation type="journal article" date="1996" name="Nucleic Acids Res.">
        <title>A yeast cap binding protein complex (yCBC) acts at an early step in pre-mRNA splicing.</title>
        <authorList>
            <person name="Lewis J.D."/>
            <person name="Goerlich D."/>
            <person name="Mattaj I.W."/>
        </authorList>
    </citation>
    <scope>FUNCTION OF THE CBC COMPLEX</scope>
</reference>
<reference key="8">
    <citation type="journal article" date="1998" name="Genes Dev.">
        <title>Arginine methylation facilitates the nuclear export of hnRNP proteins.</title>
        <authorList>
            <person name="Shen E.C."/>
            <person name="Henry M.F."/>
            <person name="Weiss V.H."/>
            <person name="Valentini S.R."/>
            <person name="Silver P.A."/>
            <person name="Lee M.S."/>
        </authorList>
    </citation>
    <scope>FUNCTION</scope>
</reference>
<reference key="9">
    <citation type="journal article" date="1999" name="Genes Dev.">
        <title>Identification of eight proteins that cross-link to pre-mRNA in the yeast commitment complex.</title>
        <authorList>
            <person name="Zhang D."/>
            <person name="Rosbash M."/>
        </authorList>
    </citation>
    <scope>INTERACTION WITH PRE-MRNA IN THE COMMITMENT COMPLEX</scope>
</reference>
<reference key="10">
    <citation type="journal article" date="1999" name="Mol. Cell. Biol.">
        <title>Genetic and physical interactions involving the yeast nuclear cap-binding complex.</title>
        <authorList>
            <person name="Fortes P."/>
            <person name="Kufel J."/>
            <person name="Fornerod M."/>
            <person name="Polycarpou-Schwarz M."/>
            <person name="Lafontaine D."/>
            <person name="Tollervey D."/>
            <person name="Mattaj I.W."/>
        </authorList>
    </citation>
    <scope>INTERACTION WITH MUD2 AND SNU56</scope>
    <scope>FUNCTION OF THE CBC COMPLEX</scope>
</reference>
<reference key="11">
    <citation type="journal article" date="1999" name="Nat. Biotechnol.">
        <title>A generic protein purification method for protein complex characterization and proteome exploration.</title>
        <authorList>
            <person name="Rigaut G."/>
            <person name="Shevchenko A."/>
            <person name="Rutz B."/>
            <person name="Wilm M."/>
            <person name="Mann M."/>
            <person name="Seraphin B."/>
        </authorList>
    </citation>
    <scope>IDENTIFICATION IN THE CBC COMPLEX</scope>
    <scope>IDENTIFICATION BY MASS SPECTROMETRY</scope>
    <scope>INTERACTION OF THE COMPLEX WITH CAPPED RNA</scope>
</reference>
<reference key="12">
    <citation type="journal article" date="2000" name="Genome Res.">
        <title>Eukaryote-specific domains in translation initiation factors: implications for translation regulation and evolution of the translation system.</title>
        <authorList>
            <person name="Aravind L."/>
            <person name="Koonin E.V."/>
        </authorList>
    </citation>
    <scope>DOMAIN</scope>
</reference>
<reference key="13">
    <citation type="journal article" date="2000" name="J. Biol. Chem.">
        <title>7The yeast mRNA-binding protein Npl3p interacts with the cap-binding complex.</title>
        <authorList>
            <person name="Shen E.C."/>
            <person name="Stage-Zimmermann T."/>
            <person name="Chui P."/>
            <person name="Silver P.A."/>
        </authorList>
    </citation>
    <scope>INTERACTION WITH NPL3</scope>
    <scope>SUBCELLULAR LOCATION</scope>
    <scope>FUNCTION</scope>
</reference>
<reference key="14">
    <citation type="journal article" date="2000" name="Mol. Cell">
        <title>The yeast nuclear cap binding complex can interact with translation factor eIF4G and mediate translation initiation.</title>
        <authorList>
            <person name="Fortes P."/>
            <person name="Inada T."/>
            <person name="Preiss T."/>
            <person name="Hentze M.W."/>
            <person name="Mattaj I.W."/>
            <person name="Sachs A.B."/>
        </authorList>
    </citation>
    <scope>INTERACTION WITH EIF4G</scope>
</reference>
<reference key="15">
    <citation type="journal article" date="2003" name="Mol. Cell. Biol.">
        <title>Degradation of normal mRNA in the nucleus of Saccharomyces cerevisiae.</title>
        <authorList>
            <person name="Das B."/>
            <person name="Butler J.S."/>
            <person name="Sherman F."/>
        </authorList>
    </citation>
    <scope>FUNCTION</scope>
</reference>
<reference key="16">
    <citation type="journal article" date="2003" name="Nature">
        <title>Global analysis of protein expression in yeast.</title>
        <authorList>
            <person name="Ghaemmaghami S."/>
            <person name="Huh W.-K."/>
            <person name="Bower K."/>
            <person name="Howson R.W."/>
            <person name="Belle A."/>
            <person name="Dephoure N."/>
            <person name="O'Shea E.K."/>
            <person name="Weissman J.S."/>
        </authorList>
    </citation>
    <scope>LEVEL OF PROTEIN EXPRESSION [LARGE SCALE ANALYSIS]</scope>
</reference>
<reference key="17">
    <citation type="journal article" date="2003" name="Proc. Natl. Acad. Sci. U.S.A.">
        <title>Systematic, genome-wide identification of host genes affecting replication of a positive-strand RNA virus.</title>
        <authorList>
            <person name="Kushner D.B."/>
            <person name="Lindenbach B.D."/>
            <person name="Grdzelishvili V.Z."/>
            <person name="Noueiry A.O."/>
            <person name="Paul S.M."/>
            <person name="Ahlquist P."/>
        </authorList>
    </citation>
    <scope>FUNCTION</scope>
</reference>
<reference key="18">
    <citation type="journal article" date="2003" name="RNA">
        <title>The interaction of the cap-binding complex (CBC) with eIF4G is dispensable for translation in yeast.</title>
        <authorList>
            <person name="Baron-Benhamou J."/>
            <person name="Fortes P."/>
            <person name="Inada T."/>
            <person name="Preiss T."/>
            <person name="Hentze M.W."/>
        </authorList>
    </citation>
    <scope>FUNCTION OF THE CBC COMPLEX</scope>
</reference>
<reference key="19">
    <citation type="journal article" date="2005" name="Proc. Natl. Acad. Sci. U.S.A.">
        <title>Cap-binding protein 1-mediated and eukaryotic translation initiation factor 4E-mediated pioneer rounds of translation in yeast.</title>
        <authorList>
            <person name="Gao Q."/>
            <person name="Das B."/>
            <person name="Sherman F."/>
            <person name="Maquat L.E."/>
        </authorList>
    </citation>
    <scope>FUNCTION</scope>
</reference>
<reference key="20">
    <citation type="journal article" date="2005" name="Proc. Natl. Acad. Sci. U.S.A.">
        <title>A nuclear degradation pathway controls the abundance of normal mRNAs in Saccharomyces cerevisiae.</title>
        <authorList>
            <person name="Kuai L."/>
            <person name="Das B."/>
            <person name="Sherman F."/>
        </authorList>
    </citation>
    <scope>FUNCTION</scope>
</reference>
<reference key="21">
    <citation type="journal article" date="2006" name="EMBO Rep.">
        <title>Subunit architecture of multimeric complexes isolated directly from cells.</title>
        <authorList>
            <person name="Hernandez H."/>
            <person name="Dziembowski A."/>
            <person name="Taverner T."/>
            <person name="Seraphin B."/>
            <person name="Robinson C.V."/>
        </authorList>
    </citation>
    <scope>IDENTIFICATION IN THE CBC COMPLEX</scope>
    <scope>INTERACTION WITH SRP1</scope>
    <scope>IDENTIFICATION BY MASS SPECTROMETRY</scope>
</reference>
<reference key="22">
    <citation type="journal article" date="2006" name="Mol. Cell">
        <title>Nrd1 interacts with the nuclear exosome for 3' processing of RNA polymerase II transcripts.</title>
        <authorList>
            <person name="Vasiljeva L."/>
            <person name="Buratowski S."/>
        </authorList>
    </citation>
    <scope>IDENTIFICATION IN NRD1 COMPLEX</scope>
    <scope>IDENTIFICATION BY MASS SPECTROMETRY</scope>
</reference>
<gene>
    <name type="primary">STO1</name>
    <name type="synonym">CBC1</name>
    <name type="synonym">CBP80</name>
    <name type="synonym">GCR3</name>
    <name type="synonym">SUT1</name>
    <name type="ordered locus">YMR125W</name>
    <name type="ORF">YM8564.07</name>
    <name type="ORF">YM9553.01</name>
</gene>
<dbReference type="EMBL" id="D10224">
    <property type="protein sequence ID" value="BAA01076.1"/>
    <property type="status" value="ALT_SEQ"/>
    <property type="molecule type" value="Genomic_DNA"/>
</dbReference>
<dbReference type="EMBL" id="L07650">
    <property type="status" value="NOT_ANNOTATED_CDS"/>
    <property type="molecule type" value="Genomic_DNA"/>
</dbReference>
<dbReference type="EMBL" id="L27744">
    <property type="status" value="NOT_ANNOTATED_CDS"/>
    <property type="molecule type" value="Genomic_DNA"/>
</dbReference>
<dbReference type="EMBL" id="Z49273">
    <property type="protein sequence ID" value="CAA89274.1"/>
    <property type="molecule type" value="Genomic_DNA"/>
</dbReference>
<dbReference type="EMBL" id="Z48622">
    <property type="protein sequence ID" value="CAA88550.1"/>
    <property type="molecule type" value="Genomic_DNA"/>
</dbReference>
<dbReference type="EMBL" id="BK006946">
    <property type="protein sequence ID" value="DAA10022.1"/>
    <property type="molecule type" value="Genomic_DNA"/>
</dbReference>
<dbReference type="PIR" id="A44919">
    <property type="entry name" value="A44919"/>
</dbReference>
<dbReference type="RefSeq" id="NP_013844.2">
    <property type="nucleotide sequence ID" value="NM_001182626.1"/>
</dbReference>
<dbReference type="PDB" id="3UKY">
    <property type="method" value="X-ray"/>
    <property type="resolution" value="2.35 A"/>
    <property type="chains" value="C=1-30"/>
</dbReference>
<dbReference type="PDB" id="6N7P">
    <property type="method" value="EM"/>
    <property type="resolution" value="3.60 A"/>
    <property type="chains" value="X=1-861"/>
</dbReference>
<dbReference type="PDBsum" id="3UKY"/>
<dbReference type="PDBsum" id="6N7P"/>
<dbReference type="EMDB" id="EMD-0360"/>
<dbReference type="SMR" id="P34160"/>
<dbReference type="BioGRID" id="35302">
    <property type="interactions" value="229"/>
</dbReference>
<dbReference type="ComplexPortal" id="CPX-1657">
    <property type="entry name" value="Nuclear cap-binding complex"/>
</dbReference>
<dbReference type="DIP" id="DIP-4434N"/>
<dbReference type="FunCoup" id="P34160">
    <property type="interactions" value="1370"/>
</dbReference>
<dbReference type="IntAct" id="P34160">
    <property type="interactions" value="79"/>
</dbReference>
<dbReference type="MINT" id="P34160"/>
<dbReference type="STRING" id="4932.YMR125W"/>
<dbReference type="iPTMnet" id="P34160"/>
<dbReference type="PaxDb" id="4932-YMR125W"/>
<dbReference type="PeptideAtlas" id="P34160"/>
<dbReference type="EnsemblFungi" id="YMR125W_mRNA">
    <property type="protein sequence ID" value="YMR125W"/>
    <property type="gene ID" value="YMR125W"/>
</dbReference>
<dbReference type="GeneID" id="855155"/>
<dbReference type="KEGG" id="sce:YMR125W"/>
<dbReference type="AGR" id="SGD:S000004732"/>
<dbReference type="SGD" id="S000004732">
    <property type="gene designation" value="STO1"/>
</dbReference>
<dbReference type="VEuPathDB" id="FungiDB:YMR125W"/>
<dbReference type="eggNOG" id="KOG1104">
    <property type="taxonomic scope" value="Eukaryota"/>
</dbReference>
<dbReference type="GeneTree" id="ENSGT00390000001733"/>
<dbReference type="HOGENOM" id="CLU_011380_0_0_1"/>
<dbReference type="InParanoid" id="P34160"/>
<dbReference type="OMA" id="CAAEGLM"/>
<dbReference type="OrthoDB" id="10252707at2759"/>
<dbReference type="BioCyc" id="YEAST:G3O-32818-MONOMER"/>
<dbReference type="Reactome" id="R-SCE-113418">
    <property type="pathway name" value="Formation of the Early Elongation Complex"/>
</dbReference>
<dbReference type="Reactome" id="R-SCE-159236">
    <property type="pathway name" value="Transport of Mature mRNA derived from an Intron-Containing Transcript"/>
</dbReference>
<dbReference type="Reactome" id="R-SCE-674695">
    <property type="pathway name" value="RNA Polymerase II Pre-transcription Events"/>
</dbReference>
<dbReference type="Reactome" id="R-SCE-72086">
    <property type="pathway name" value="mRNA Capping"/>
</dbReference>
<dbReference type="Reactome" id="R-SCE-72203">
    <property type="pathway name" value="Processing of Capped Intron-Containing Pre-mRNA"/>
</dbReference>
<dbReference type="Reactome" id="R-SCE-77595">
    <property type="pathway name" value="Processing of Intronless Pre-mRNAs"/>
</dbReference>
<dbReference type="Reactome" id="R-SCE-975956">
    <property type="pathway name" value="Nonsense Mediated Decay (NMD) independent of the Exon Junction Complex (EJC)"/>
</dbReference>
<dbReference type="Reactome" id="R-SCE-975957">
    <property type="pathway name" value="Nonsense Mediated Decay (NMD) enhanced by the Exon Junction Complex (EJC)"/>
</dbReference>
<dbReference type="BioGRID-ORCS" id="855155">
    <property type="hits" value="0 hits in 10 CRISPR screens"/>
</dbReference>
<dbReference type="EvolutionaryTrace" id="P34160"/>
<dbReference type="PRO" id="PR:P34160"/>
<dbReference type="Proteomes" id="UP000002311">
    <property type="component" value="Chromosome XIII"/>
</dbReference>
<dbReference type="RNAct" id="P34160">
    <property type="molecule type" value="protein"/>
</dbReference>
<dbReference type="GO" id="GO:0000243">
    <property type="term" value="C:commitment complex"/>
    <property type="evidence" value="ECO:0000353"/>
    <property type="project" value="SGD"/>
</dbReference>
<dbReference type="GO" id="GO:0005846">
    <property type="term" value="C:nuclear cap binding complex"/>
    <property type="evidence" value="ECO:0000314"/>
    <property type="project" value="SGD"/>
</dbReference>
<dbReference type="GO" id="GO:0005634">
    <property type="term" value="C:nucleus"/>
    <property type="evidence" value="ECO:0000314"/>
    <property type="project" value="ComplexPortal"/>
</dbReference>
<dbReference type="GO" id="GO:0048471">
    <property type="term" value="C:perinuclear region of cytoplasm"/>
    <property type="evidence" value="ECO:0007669"/>
    <property type="project" value="UniProtKB-SubCell"/>
</dbReference>
<dbReference type="GO" id="GO:0003729">
    <property type="term" value="F:mRNA binding"/>
    <property type="evidence" value="ECO:0000353"/>
    <property type="project" value="SGD"/>
</dbReference>
<dbReference type="GO" id="GO:0000339">
    <property type="term" value="F:RNA cap binding"/>
    <property type="evidence" value="ECO:0000318"/>
    <property type="project" value="GO_Central"/>
</dbReference>
<dbReference type="GO" id="GO:0006370">
    <property type="term" value="P:7-methylguanosine mRNA capping"/>
    <property type="evidence" value="ECO:0007669"/>
    <property type="project" value="UniProtKB-KW"/>
</dbReference>
<dbReference type="GO" id="GO:0031124">
    <property type="term" value="P:mRNA 3'-end processing"/>
    <property type="evidence" value="ECO:0000315"/>
    <property type="project" value="ComplexPortal"/>
</dbReference>
<dbReference type="GO" id="GO:0006406">
    <property type="term" value="P:mRNA export from nucleus"/>
    <property type="evidence" value="ECO:0000314"/>
    <property type="project" value="ComplexPortal"/>
</dbReference>
<dbReference type="GO" id="GO:0000398">
    <property type="term" value="P:mRNA splicing, via spliceosome"/>
    <property type="evidence" value="ECO:0000314"/>
    <property type="project" value="ComplexPortal"/>
</dbReference>
<dbReference type="GO" id="GO:0042789">
    <property type="term" value="P:mRNA transcription by RNA polymerase II"/>
    <property type="evidence" value="ECO:0000315"/>
    <property type="project" value="ComplexPortal"/>
</dbReference>
<dbReference type="GO" id="GO:0000956">
    <property type="term" value="P:nuclear-transcribed mRNA catabolic process"/>
    <property type="evidence" value="ECO:0000315"/>
    <property type="project" value="ComplexPortal"/>
</dbReference>
<dbReference type="GO" id="GO:0000184">
    <property type="term" value="P:nuclear-transcribed mRNA catabolic process, nonsense-mediated decay"/>
    <property type="evidence" value="ECO:0000314"/>
    <property type="project" value="SGD"/>
</dbReference>
<dbReference type="GO" id="GO:0031053">
    <property type="term" value="P:primary miRNA processing"/>
    <property type="evidence" value="ECO:0000303"/>
    <property type="project" value="ComplexPortal"/>
</dbReference>
<dbReference type="GO" id="GO:0006970">
    <property type="term" value="P:response to osmotic stress"/>
    <property type="evidence" value="ECO:0000314"/>
    <property type="project" value="ComplexPortal"/>
</dbReference>
<dbReference type="FunFam" id="1.25.40.180:FF:000070">
    <property type="entry name" value="Nuclear cap-binding protein complex subunit 1"/>
    <property type="match status" value="1"/>
</dbReference>
<dbReference type="FunFam" id="1.25.40.180:FF:000056">
    <property type="entry name" value="Sto1p"/>
    <property type="match status" value="1"/>
</dbReference>
<dbReference type="Gene3D" id="1.25.40.180">
    <property type="match status" value="3"/>
</dbReference>
<dbReference type="IDEAL" id="IID50172"/>
<dbReference type="InterPro" id="IPR016024">
    <property type="entry name" value="ARM-type_fold"/>
</dbReference>
<dbReference type="InterPro" id="IPR027159">
    <property type="entry name" value="CBP80"/>
</dbReference>
<dbReference type="InterPro" id="IPR015172">
    <property type="entry name" value="MIF4G-like_typ-1"/>
</dbReference>
<dbReference type="InterPro" id="IPR015174">
    <property type="entry name" value="MIF4G-like_typ-2"/>
</dbReference>
<dbReference type="InterPro" id="IPR003890">
    <property type="entry name" value="MIF4G-like_typ-3"/>
</dbReference>
<dbReference type="PANTHER" id="PTHR12412">
    <property type="entry name" value="CAP BINDING PROTEIN"/>
    <property type="match status" value="1"/>
</dbReference>
<dbReference type="PANTHER" id="PTHR12412:SF2">
    <property type="entry name" value="NUCLEAR CAP-BINDING PROTEIN SUBUNIT 1"/>
    <property type="match status" value="1"/>
</dbReference>
<dbReference type="Pfam" id="PF02854">
    <property type="entry name" value="MIF4G"/>
    <property type="match status" value="1"/>
</dbReference>
<dbReference type="Pfam" id="PF09088">
    <property type="entry name" value="MIF4G_like"/>
    <property type="match status" value="1"/>
</dbReference>
<dbReference type="Pfam" id="PF09090">
    <property type="entry name" value="MIF4G_like_2"/>
    <property type="match status" value="1"/>
</dbReference>
<dbReference type="SMART" id="SM00543">
    <property type="entry name" value="MIF4G"/>
    <property type="match status" value="1"/>
</dbReference>
<dbReference type="SUPFAM" id="SSF48371">
    <property type="entry name" value="ARM repeat"/>
    <property type="match status" value="3"/>
</dbReference>
<feature type="chain" id="PRO_0000087447" description="Nuclear cap-binding protein complex subunit 1">
    <location>
        <begin position="1"/>
        <end position="861"/>
    </location>
</feature>
<feature type="domain" description="MIF4G">
    <location>
        <begin position="36"/>
        <end position="264"/>
    </location>
</feature>
<feature type="short sequence motif" description="Nuclear localization signal" evidence="1">
    <location>
        <begin position="22"/>
        <end position="30"/>
    </location>
</feature>
<feature type="sequence conflict" description="In Ref. 3; L27744." evidence="21" ref="3">
    <original>D</original>
    <variation>V</variation>
    <location>
        <position position="164"/>
    </location>
</feature>
<feature type="sequence conflict" description="In Ref. 3; L27744." evidence="21" ref="3">
    <original>R</original>
    <variation>I</variation>
    <location>
        <position position="633"/>
    </location>
</feature>
<feature type="sequence conflict" description="In Ref. 3; L27744." evidence="21" ref="3">
    <original>A</original>
    <variation>R</variation>
    <location>
        <position position="704"/>
    </location>
</feature>
<comment type="function">
    <text evidence="3 5 6 8 9 11 12 13 14 17 18 19 20">Component of the CBC complex, which binds co-transcriptionally to the 5'-cap of pre-mRNAs and is involved in maturation, export and degradation of nuclear mRNAs. The CBC complex is required for efficient pre-mRNA splicing through efficient commitment complex and spliceosome formation. Together with NPL3, the CBC complex is required for export of mRNAs out of the nucleus. The CBC complex is also involved in nuclear mRNA degradation, probably by directing the mRNAs to the sites of degradation. Affects replication of the positive-strand RNA virus BMV.</text>
</comment>
<comment type="subunit">
    <text evidence="2 3 4 6 7 15 16 19">Component of the nuclear cap-binding complex (CBC), a heterodimer composed of STO1/CBC1 and CBC2 that interacts with capped RNAs. The complex interacts strongly with the importin subunit alpha SRP1. The SRP1-CBC trimer also binds to capped RNAs, but formation of the importin alpha/beta heterodimer upon binding of KAP95 to SRP1 in the cytoplasm causes dissociation of CBC from the RNA. The CBC complex is part of the commitment complex 1 (CC1), binding to the cap of pre-mRNA and interacting with U1 snRNP subunits MUD2 and SNU56. The CBC complex is part of the NRD1 complex, composed of CBC2, NAB1, NRD1, SEN1 and STO1/CBC2. The CBC complex also interacts with NPL3 and eIF4G (TIF4631 and TIF4632).</text>
</comment>
<comment type="interaction">
    <interactant intactId="EBI-745">
        <id>P34160</id>
    </interactant>
    <interactant intactId="EBI-33556">
        <id>Q08920</id>
        <label>CBC2</label>
    </interactant>
    <organismsDiffer>false</organismsDiffer>
    <experiments>6</experiments>
</comment>
<comment type="subcellular location">
    <subcellularLocation>
        <location evidence="5 6 19">Nucleus</location>
    </subcellularLocation>
    <subcellularLocation>
        <location evidence="6">Cytoplasm</location>
        <location evidence="6">Perinuclear region</location>
    </subcellularLocation>
    <text evidence="6">Predominantly nuclear, is able to exit the nucleus in an RNA-dependent manner.</text>
</comment>
<comment type="miscellaneous">
    <text evidence="10">Present with 11300 molecules/cell in log phase SD medium.</text>
</comment>
<comment type="miscellaneous">
    <text>In contrast to metazoans, where the CBC complex is involved in the nuclear export of capped U snRNAs, it is believed that in yeast, U snRNAs are not exported from the nucleus and U snRNPs are assembled in the nucleus from RNAs and imported proteins.</text>
</comment>
<comment type="similarity">
    <text evidence="21">Belongs to the NCBP1 family.</text>
</comment>
<comment type="sequence caution" evidence="21">
    <conflict type="erroneous gene model prediction">
        <sequence resource="EMBL-CDS" id="BAA01076"/>
    </conflict>
</comment>
<comment type="sequence caution" evidence="21">
    <conflict type="frameshift">
        <sequence resource="EMBL" id="L27744"/>
    </conflict>
</comment>
<keyword id="KW-0002">3D-structure</keyword>
<keyword id="KW-0963">Cytoplasm</keyword>
<keyword id="KW-0903">Direct protein sequencing</keyword>
<keyword id="KW-0506">mRNA capping</keyword>
<keyword id="KW-0507">mRNA processing</keyword>
<keyword id="KW-0508">mRNA splicing</keyword>
<keyword id="KW-0509">mRNA transport</keyword>
<keyword id="KW-0866">Nonsense-mediated mRNA decay</keyword>
<keyword id="KW-0539">Nucleus</keyword>
<keyword id="KW-1185">Reference proteome</keyword>
<keyword id="KW-0694">RNA-binding</keyword>
<keyword id="KW-0813">Transport</keyword>
<name>NCBP1_YEAST</name>
<organism>
    <name type="scientific">Saccharomyces cerevisiae (strain ATCC 204508 / S288c)</name>
    <name type="common">Baker's yeast</name>
    <dbReference type="NCBI Taxonomy" id="559292"/>
    <lineage>
        <taxon>Eukaryota</taxon>
        <taxon>Fungi</taxon>
        <taxon>Dikarya</taxon>
        <taxon>Ascomycota</taxon>
        <taxon>Saccharomycotina</taxon>
        <taxon>Saccharomycetes</taxon>
        <taxon>Saccharomycetales</taxon>
        <taxon>Saccharomycetaceae</taxon>
        <taxon>Saccharomyces</taxon>
    </lineage>
</organism>
<evidence type="ECO:0000255" key="1"/>
<evidence type="ECO:0000269" key="2">
    <source>
    </source>
</evidence>
<evidence type="ECO:0000269" key="3">
    <source>
    </source>
</evidence>
<evidence type="ECO:0000269" key="4">
    <source>
    </source>
</evidence>
<evidence type="ECO:0000269" key="5">
    <source>
    </source>
</evidence>
<evidence type="ECO:0000269" key="6">
    <source>
    </source>
</evidence>
<evidence type="ECO:0000269" key="7">
    <source>
    </source>
</evidence>
<evidence type="ECO:0000269" key="8">
    <source>
    </source>
</evidence>
<evidence type="ECO:0000269" key="9">
    <source>
    </source>
</evidence>
<evidence type="ECO:0000269" key="10">
    <source>
    </source>
</evidence>
<evidence type="ECO:0000269" key="11">
    <source>
    </source>
</evidence>
<evidence type="ECO:0000269" key="12">
    <source>
    </source>
</evidence>
<evidence type="ECO:0000269" key="13">
    <source>
    </source>
</evidence>
<evidence type="ECO:0000269" key="14">
    <source>
    </source>
</evidence>
<evidence type="ECO:0000269" key="15">
    <source>
    </source>
</evidence>
<evidence type="ECO:0000269" key="16">
    <source>
    </source>
</evidence>
<evidence type="ECO:0000269" key="17">
    <source>
    </source>
</evidence>
<evidence type="ECO:0000269" key="18">
    <source>
    </source>
</evidence>
<evidence type="ECO:0000269" key="19">
    <source>
    </source>
</evidence>
<evidence type="ECO:0000269" key="20">
    <source>
    </source>
</evidence>
<evidence type="ECO:0000305" key="21"/>
<protein>
    <recommendedName>
        <fullName>Nuclear cap-binding protein complex subunit 1</fullName>
    </recommendedName>
    <alternativeName>
        <fullName>80 kDa nuclear cap-binding protein</fullName>
        <shortName>CBP80</shortName>
        <shortName>NCBP 80 kDa subunit</shortName>
    </alternativeName>
    <alternativeName>
        <fullName>Glycolysis regulation protein 3</fullName>
    </alternativeName>
    <alternativeName>
        <fullName>Protein SUT1</fullName>
    </alternativeName>
    <alternativeName>
        <fullName>Suppressor of TOP1 protein</fullName>
    </alternativeName>
</protein>
<proteinExistence type="evidence at protein level"/>